<organism>
    <name type="scientific">Arabidopsis thaliana</name>
    <name type="common">Mouse-ear cress</name>
    <dbReference type="NCBI Taxonomy" id="3702"/>
    <lineage>
        <taxon>Eukaryota</taxon>
        <taxon>Viridiplantae</taxon>
        <taxon>Streptophyta</taxon>
        <taxon>Embryophyta</taxon>
        <taxon>Tracheophyta</taxon>
        <taxon>Spermatophyta</taxon>
        <taxon>Magnoliopsida</taxon>
        <taxon>eudicotyledons</taxon>
        <taxon>Gunneridae</taxon>
        <taxon>Pentapetalae</taxon>
        <taxon>rosids</taxon>
        <taxon>malvids</taxon>
        <taxon>Brassicales</taxon>
        <taxon>Brassicaceae</taxon>
        <taxon>Camelineae</taxon>
        <taxon>Arabidopsis</taxon>
    </lineage>
</organism>
<dbReference type="EMBL" id="AL163763">
    <property type="protein sequence ID" value="CAB87422.1"/>
    <property type="molecule type" value="Genomic_DNA"/>
</dbReference>
<dbReference type="EMBL" id="CP002686">
    <property type="protein sequence ID" value="AEE79499.1"/>
    <property type="molecule type" value="Genomic_DNA"/>
</dbReference>
<dbReference type="EMBL" id="BT012360">
    <property type="protein sequence ID" value="AAS77485.1"/>
    <property type="molecule type" value="mRNA"/>
</dbReference>
<dbReference type="EMBL" id="AK176299">
    <property type="protein sequence ID" value="BAD44062.1"/>
    <property type="molecule type" value="mRNA"/>
</dbReference>
<dbReference type="PIR" id="T47740">
    <property type="entry name" value="T47740"/>
</dbReference>
<dbReference type="RefSeq" id="NP_191182.1">
    <property type="nucleotide sequence ID" value="NM_115481.4"/>
</dbReference>
<dbReference type="SMR" id="Q9LYL9"/>
<dbReference type="BioGRID" id="10105">
    <property type="interactions" value="5"/>
</dbReference>
<dbReference type="FunCoup" id="Q9LYL9">
    <property type="interactions" value="224"/>
</dbReference>
<dbReference type="IntAct" id="Q9LYL9">
    <property type="interactions" value="5"/>
</dbReference>
<dbReference type="STRING" id="3702.Q9LYL9"/>
<dbReference type="PaxDb" id="3702-AT3G56230.1"/>
<dbReference type="EnsemblPlants" id="AT3G56230.1">
    <property type="protein sequence ID" value="AT3G56230.1"/>
    <property type="gene ID" value="AT3G56230"/>
</dbReference>
<dbReference type="GeneID" id="824789"/>
<dbReference type="Gramene" id="AT3G56230.1">
    <property type="protein sequence ID" value="AT3G56230.1"/>
    <property type="gene ID" value="AT3G56230"/>
</dbReference>
<dbReference type="KEGG" id="ath:AT3G56230"/>
<dbReference type="Araport" id="AT3G56230"/>
<dbReference type="TAIR" id="AT3G56230"/>
<dbReference type="eggNOG" id="KOG1987">
    <property type="taxonomic scope" value="Eukaryota"/>
</dbReference>
<dbReference type="HOGENOM" id="CLU_004253_9_1_1"/>
<dbReference type="InParanoid" id="Q9LYL9"/>
<dbReference type="OMA" id="CEAFICA"/>
<dbReference type="PhylomeDB" id="Q9LYL9"/>
<dbReference type="UniPathway" id="UPA00143"/>
<dbReference type="PRO" id="PR:Q9LYL9"/>
<dbReference type="Proteomes" id="UP000006548">
    <property type="component" value="Chromosome 3"/>
</dbReference>
<dbReference type="ExpressionAtlas" id="Q9LYL9">
    <property type="expression patterns" value="baseline and differential"/>
</dbReference>
<dbReference type="GO" id="GO:0016567">
    <property type="term" value="P:protein ubiquitination"/>
    <property type="evidence" value="ECO:0007669"/>
    <property type="project" value="UniProtKB-UniPathway"/>
</dbReference>
<dbReference type="CDD" id="cd18186">
    <property type="entry name" value="BTB_POZ_ZBTB_KLHL-like"/>
    <property type="match status" value="1"/>
</dbReference>
<dbReference type="Gene3D" id="1.25.40.420">
    <property type="match status" value="1"/>
</dbReference>
<dbReference type="Gene3D" id="3.30.710.10">
    <property type="entry name" value="Potassium Channel Kv1.1, Chain A"/>
    <property type="match status" value="1"/>
</dbReference>
<dbReference type="InterPro" id="IPR044784">
    <property type="entry name" value="At1g01640-like"/>
</dbReference>
<dbReference type="InterPro" id="IPR000210">
    <property type="entry name" value="BTB/POZ_dom"/>
</dbReference>
<dbReference type="InterPro" id="IPR011333">
    <property type="entry name" value="SKP1/BTB/POZ_sf"/>
</dbReference>
<dbReference type="PANTHER" id="PTHR47274">
    <property type="entry name" value="BTB/POZ DOMAIN CONTAINING PROTEIN, EXPRESSED-RELATED"/>
    <property type="match status" value="1"/>
</dbReference>
<dbReference type="PANTHER" id="PTHR47274:SF1">
    <property type="entry name" value="BTB_POZ DOMAIN CONTAINING PROTEIN, EXPRESSED"/>
    <property type="match status" value="1"/>
</dbReference>
<dbReference type="Pfam" id="PF00651">
    <property type="entry name" value="BTB"/>
    <property type="match status" value="1"/>
</dbReference>
<dbReference type="SMART" id="SM00225">
    <property type="entry name" value="BTB"/>
    <property type="match status" value="1"/>
</dbReference>
<dbReference type="SUPFAM" id="SSF54695">
    <property type="entry name" value="POZ domain"/>
    <property type="match status" value="1"/>
</dbReference>
<dbReference type="PROSITE" id="PS50097">
    <property type="entry name" value="BTB"/>
    <property type="match status" value="1"/>
</dbReference>
<reference key="1">
    <citation type="journal article" date="2000" name="Nature">
        <title>Sequence and analysis of chromosome 3 of the plant Arabidopsis thaliana.</title>
        <authorList>
            <person name="Salanoubat M."/>
            <person name="Lemcke K."/>
            <person name="Rieger M."/>
            <person name="Ansorge W."/>
            <person name="Unseld M."/>
            <person name="Fartmann B."/>
            <person name="Valle G."/>
            <person name="Bloecker H."/>
            <person name="Perez-Alonso M."/>
            <person name="Obermaier B."/>
            <person name="Delseny M."/>
            <person name="Boutry M."/>
            <person name="Grivell L.A."/>
            <person name="Mache R."/>
            <person name="Puigdomenech P."/>
            <person name="De Simone V."/>
            <person name="Choisne N."/>
            <person name="Artiguenave F."/>
            <person name="Robert C."/>
            <person name="Brottier P."/>
            <person name="Wincker P."/>
            <person name="Cattolico L."/>
            <person name="Weissenbach J."/>
            <person name="Saurin W."/>
            <person name="Quetier F."/>
            <person name="Schaefer M."/>
            <person name="Mueller-Auer S."/>
            <person name="Gabel C."/>
            <person name="Fuchs M."/>
            <person name="Benes V."/>
            <person name="Wurmbach E."/>
            <person name="Drzonek H."/>
            <person name="Erfle H."/>
            <person name="Jordan N."/>
            <person name="Bangert S."/>
            <person name="Wiedelmann R."/>
            <person name="Kranz H."/>
            <person name="Voss H."/>
            <person name="Holland R."/>
            <person name="Brandt P."/>
            <person name="Nyakatura G."/>
            <person name="Vezzi A."/>
            <person name="D'Angelo M."/>
            <person name="Pallavicini A."/>
            <person name="Toppo S."/>
            <person name="Simionati B."/>
            <person name="Conrad A."/>
            <person name="Hornischer K."/>
            <person name="Kauer G."/>
            <person name="Loehnert T.-H."/>
            <person name="Nordsiek G."/>
            <person name="Reichelt J."/>
            <person name="Scharfe M."/>
            <person name="Schoen O."/>
            <person name="Bargues M."/>
            <person name="Terol J."/>
            <person name="Climent J."/>
            <person name="Navarro P."/>
            <person name="Collado C."/>
            <person name="Perez-Perez A."/>
            <person name="Ottenwaelder B."/>
            <person name="Duchemin D."/>
            <person name="Cooke R."/>
            <person name="Laudie M."/>
            <person name="Berger-Llauro C."/>
            <person name="Purnelle B."/>
            <person name="Masuy D."/>
            <person name="de Haan M."/>
            <person name="Maarse A.C."/>
            <person name="Alcaraz J.-P."/>
            <person name="Cottet A."/>
            <person name="Casacuberta E."/>
            <person name="Monfort A."/>
            <person name="Argiriou A."/>
            <person name="Flores M."/>
            <person name="Liguori R."/>
            <person name="Vitale D."/>
            <person name="Mannhaupt G."/>
            <person name="Haase D."/>
            <person name="Schoof H."/>
            <person name="Rudd S."/>
            <person name="Zaccaria P."/>
            <person name="Mewes H.-W."/>
            <person name="Mayer K.F.X."/>
            <person name="Kaul S."/>
            <person name="Town C.D."/>
            <person name="Koo H.L."/>
            <person name="Tallon L.J."/>
            <person name="Jenkins J."/>
            <person name="Rooney T."/>
            <person name="Rizzo M."/>
            <person name="Walts A."/>
            <person name="Utterback T."/>
            <person name="Fujii C.Y."/>
            <person name="Shea T.P."/>
            <person name="Creasy T.H."/>
            <person name="Haas B."/>
            <person name="Maiti R."/>
            <person name="Wu D."/>
            <person name="Peterson J."/>
            <person name="Van Aken S."/>
            <person name="Pai G."/>
            <person name="Militscher J."/>
            <person name="Sellers P."/>
            <person name="Gill J.E."/>
            <person name="Feldblyum T.V."/>
            <person name="Preuss D."/>
            <person name="Lin X."/>
            <person name="Nierman W.C."/>
            <person name="Salzberg S.L."/>
            <person name="White O."/>
            <person name="Venter J.C."/>
            <person name="Fraser C.M."/>
            <person name="Kaneko T."/>
            <person name="Nakamura Y."/>
            <person name="Sato S."/>
            <person name="Kato T."/>
            <person name="Asamizu E."/>
            <person name="Sasamoto S."/>
            <person name="Kimura T."/>
            <person name="Idesawa K."/>
            <person name="Kawashima K."/>
            <person name="Kishida Y."/>
            <person name="Kiyokawa C."/>
            <person name="Kohara M."/>
            <person name="Matsumoto M."/>
            <person name="Matsuno A."/>
            <person name="Muraki A."/>
            <person name="Nakayama S."/>
            <person name="Nakazaki N."/>
            <person name="Shinpo S."/>
            <person name="Takeuchi C."/>
            <person name="Wada T."/>
            <person name="Watanabe A."/>
            <person name="Yamada M."/>
            <person name="Yasuda M."/>
            <person name="Tabata S."/>
        </authorList>
    </citation>
    <scope>NUCLEOTIDE SEQUENCE [LARGE SCALE GENOMIC DNA]</scope>
    <source>
        <strain>cv. Columbia</strain>
    </source>
</reference>
<reference key="2">
    <citation type="journal article" date="2017" name="Plant J.">
        <title>Araport11: a complete reannotation of the Arabidopsis thaliana reference genome.</title>
        <authorList>
            <person name="Cheng C.Y."/>
            <person name="Krishnakumar V."/>
            <person name="Chan A.P."/>
            <person name="Thibaud-Nissen F."/>
            <person name="Schobel S."/>
            <person name="Town C.D."/>
        </authorList>
    </citation>
    <scope>GENOME REANNOTATION</scope>
    <source>
        <strain>cv. Columbia</strain>
    </source>
</reference>
<reference key="3">
    <citation type="submission" date="2004-03" db="EMBL/GenBank/DDBJ databases">
        <title>Arabidopsis ORF clones.</title>
        <authorList>
            <person name="Shinn P."/>
            <person name="Chen H."/>
            <person name="Cheuk R.F."/>
            <person name="Kim C.J."/>
            <person name="Ecker J.R."/>
        </authorList>
    </citation>
    <scope>NUCLEOTIDE SEQUENCE [LARGE SCALE MRNA]</scope>
    <source>
        <strain>cv. Columbia</strain>
    </source>
</reference>
<reference key="4">
    <citation type="submission" date="2004-09" db="EMBL/GenBank/DDBJ databases">
        <title>Large-scale analysis of RIKEN Arabidopsis full-length (RAFL) cDNAs.</title>
        <authorList>
            <person name="Totoki Y."/>
            <person name="Seki M."/>
            <person name="Ishida J."/>
            <person name="Nakajima M."/>
            <person name="Enju A."/>
            <person name="Kamiya A."/>
            <person name="Narusaka M."/>
            <person name="Shin-i T."/>
            <person name="Nakagawa M."/>
            <person name="Sakamoto N."/>
            <person name="Oishi K."/>
            <person name="Kohara Y."/>
            <person name="Kobayashi M."/>
            <person name="Toyoda A."/>
            <person name="Sakaki Y."/>
            <person name="Sakurai T."/>
            <person name="Iida K."/>
            <person name="Akiyama K."/>
            <person name="Satou M."/>
            <person name="Toyoda T."/>
            <person name="Konagaya A."/>
            <person name="Carninci P."/>
            <person name="Kawai J."/>
            <person name="Hayashizaki Y."/>
            <person name="Shinozaki K."/>
        </authorList>
    </citation>
    <scope>NUCLEOTIDE SEQUENCE [LARGE SCALE MRNA]</scope>
    <source>
        <strain>cv. Columbia</strain>
    </source>
</reference>
<reference key="5">
    <citation type="journal article" date="2005" name="J. Biol. Chem.">
        <title>Cullins 3a and 3b assemble with members of the broad complex/tramtrack/bric-a-brac (BTB) protein family to form essential ubiquitin-protein ligases (E3s) in Arabidopsis.</title>
        <authorList>
            <person name="Gingerich D.J."/>
            <person name="Gagne J.M."/>
            <person name="Salter D.W."/>
            <person name="Hellmann H."/>
            <person name="Estelle M."/>
            <person name="Ma L."/>
            <person name="Vierstra R.D."/>
        </authorList>
    </citation>
    <scope>DOMAIN BTB</scope>
</reference>
<keyword id="KW-1185">Reference proteome</keyword>
<keyword id="KW-0833">Ubl conjugation pathway</keyword>
<name>Y3623_ARATH</name>
<gene>
    <name type="ordered locus">At3g56230</name>
    <name type="ORF">F18O21_190</name>
</gene>
<evidence type="ECO:0000250" key="1"/>
<evidence type="ECO:0000255" key="2">
    <source>
        <dbReference type="PROSITE-ProRule" id="PRU00037"/>
    </source>
</evidence>
<evidence type="ECO:0000256" key="3">
    <source>
        <dbReference type="SAM" id="MobiDB-lite"/>
    </source>
</evidence>
<evidence type="ECO:0000269" key="4">
    <source>
    </source>
</evidence>
<protein>
    <recommendedName>
        <fullName>BTB/POZ domain-containing protein At3g56230</fullName>
    </recommendedName>
</protein>
<sequence>MDCSICTTMPSILRPPRNTICGSCYEGARTTIALLKKLEGSKEDRHDKSNHNSTINNGSSISSSPLFSCEPQPLEKVIKWMKNMKETEEEQKKRIVFLSSFVSGFKEQLHADILLKPGDDGPPIPAHRALLASKSEIFKNILDSDGCKTAPEYAITLQELNSEQLQALLEFLYTGTLASDKLEKNVYALFIAADKYMIHYLQELCEQYMLSSLDISSVLNVLDVSDLGSSKTLKEACVGFVVRNMDDVVFSDKYEPFSQKNQHLCVEITRAFLMETRSKRRD</sequence>
<comment type="function">
    <text evidence="1">May act as a substrate-specific adapter of an E3 ubiquitin-protein ligase complex (CUL3-RBX1-BTB) which mediates the ubiquitination and subsequent proteasomal degradation of target proteins.</text>
</comment>
<comment type="pathway">
    <text>Protein modification; protein ubiquitination.</text>
</comment>
<comment type="domain">
    <text evidence="4">The BTB/POZ domain mediates the interaction with some component of ubiquitin ligase complexes.</text>
</comment>
<proteinExistence type="evidence at transcript level"/>
<accession>Q9LYL9</accession>
<feature type="chain" id="PRO_0000406001" description="BTB/POZ domain-containing protein At3g56230">
    <location>
        <begin position="1"/>
        <end position="282"/>
    </location>
</feature>
<feature type="domain" description="BTB" evidence="2">
    <location>
        <begin position="111"/>
        <end position="181"/>
    </location>
</feature>
<feature type="region of interest" description="Disordered" evidence="3">
    <location>
        <begin position="40"/>
        <end position="66"/>
    </location>
</feature>
<feature type="compositionally biased region" description="Basic and acidic residues" evidence="3">
    <location>
        <begin position="40"/>
        <end position="50"/>
    </location>
</feature>
<feature type="compositionally biased region" description="Low complexity" evidence="3">
    <location>
        <begin position="51"/>
        <end position="64"/>
    </location>
</feature>